<protein>
    <recommendedName>
        <fullName evidence="5">Acryloyl-coenzyme A reductase</fullName>
        <shortName evidence="5">Acryloyl-CoA reductase</shortName>
        <ecNumber>1.3.1.84</ecNumber>
    </recommendedName>
</protein>
<keyword id="KW-0479">Metal-binding</keyword>
<keyword id="KW-0521">NADP</keyword>
<keyword id="KW-0560">Oxidoreductase</keyword>
<keyword id="KW-1185">Reference proteome</keyword>
<keyword id="KW-0862">Zinc</keyword>
<accession>Q975C8</accession>
<accession>B8XVT1</accession>
<evidence type="ECO:0000250" key="1"/>
<evidence type="ECO:0000250" key="2">
    <source>
        <dbReference type="UniProtKB" id="P39462"/>
    </source>
</evidence>
<evidence type="ECO:0000255" key="3"/>
<evidence type="ECO:0000269" key="4">
    <source>
    </source>
</evidence>
<evidence type="ECO:0000303" key="5">
    <source>
    </source>
</evidence>
<evidence type="ECO:0000305" key="6"/>
<evidence type="ECO:0000312" key="7">
    <source>
        <dbReference type="EMBL" id="BAB65473.1"/>
    </source>
</evidence>
<organism>
    <name type="scientific">Sulfurisphaera tokodaii (strain DSM 16993 / JCM 10545 / NBRC 100140 / 7)</name>
    <name type="common">Sulfolobus tokodaii</name>
    <dbReference type="NCBI Taxonomy" id="273063"/>
    <lineage>
        <taxon>Archaea</taxon>
        <taxon>Thermoproteota</taxon>
        <taxon>Thermoprotei</taxon>
        <taxon>Sulfolobales</taxon>
        <taxon>Sulfolobaceae</taxon>
        <taxon>Sulfurisphaera</taxon>
    </lineage>
</organism>
<reference evidence="7" key="1">
    <citation type="journal article" date="2001" name="DNA Res.">
        <title>Complete genome sequence of an aerobic thermoacidophilic Crenarchaeon, Sulfolobus tokodaii strain7.</title>
        <authorList>
            <person name="Kawarabayasi Y."/>
            <person name="Hino Y."/>
            <person name="Horikawa H."/>
            <person name="Jin-no K."/>
            <person name="Takahashi M."/>
            <person name="Sekine M."/>
            <person name="Baba S."/>
            <person name="Ankai A."/>
            <person name="Kosugi H."/>
            <person name="Hosoyama A."/>
            <person name="Fukui S."/>
            <person name="Nagai Y."/>
            <person name="Nishijima K."/>
            <person name="Otsuka R."/>
            <person name="Nakazawa H."/>
            <person name="Takamiya M."/>
            <person name="Kato Y."/>
            <person name="Yoshizawa T."/>
            <person name="Tanaka T."/>
            <person name="Kudoh Y."/>
            <person name="Yamazaki J."/>
            <person name="Kushida N."/>
            <person name="Oguchi A."/>
            <person name="Aoki K."/>
            <person name="Masuda S."/>
            <person name="Yanagii M."/>
            <person name="Nishimura M."/>
            <person name="Yamagishi A."/>
            <person name="Oshima T."/>
            <person name="Kikuchi H."/>
        </authorList>
    </citation>
    <scope>NUCLEOTIDE SEQUENCE [LARGE SCALE GENOMIC DNA]</scope>
    <source>
        <strain>DSM 16993 / JCM 10545 / NBRC 100140 / 7</strain>
    </source>
</reference>
<reference evidence="6" key="2">
    <citation type="journal article" date="2009" name="J. Bacteriol.">
        <title>3-hydroxypropionyl-coenzyme A dehydratase and acryloyl-coenzyme A reductase, enzymes of the autotrophic 3-hydroxypropionate/4-hydroxybutyrate cycle in the Sulfolobales.</title>
        <authorList>
            <person name="Teufel R."/>
            <person name="Kung J.W."/>
            <person name="Kockelkorn D."/>
            <person name="Alber B.E."/>
            <person name="Fuchs G."/>
        </authorList>
    </citation>
    <scope>NUCLEOTIDE SEQUENCE [GENOMIC DNA]</scope>
    <scope>FUNCTION</scope>
    <scope>CATALYTIC ACTIVITY</scope>
    <scope>COFACTOR</scope>
    <scope>BIOPHYSICOCHEMICAL PROPERTIES</scope>
    <scope>SUBUNIT</scope>
    <source>
        <strain>DSM 16993 / JCM 10545 / NBRC 100140 / 7</strain>
    </source>
</reference>
<name>ACAR_SULTO</name>
<sequence>MKAIVVPGPKQGYKLEEVPDPKPGKDEVIIRVDRAALCYRDLLQLQGYYPRMKYPVILGHEVVGTIEEVGENIKGFEVGDKVISLLYAPDGTCEYCQIGEEAYCHHRLGYSEELDGFFAEKAKIKVTSLVKVPKGTPDEGAVLVPCVTGMIYRGIRRAGGIRKGELVLVTGASGGVGIHAIQVAKALGAKVIGVTTSEEKAKIIKQYADYVIVGTKFSEEAKKIGDVTLVIDTVGTPTFDESLKSLWMGGRIVQIGNVDPSQIYNLRLGYIILKDLKIVGHASATKKDAEDTLKLTQEGKIKPVIAGTVSLENIDEGYKMIKDKNKVGKVLVKP</sequence>
<proteinExistence type="evidence at protein level"/>
<dbReference type="EC" id="1.3.1.84"/>
<dbReference type="EMBL" id="BA000023">
    <property type="protein sequence ID" value="BAB65473.1"/>
    <property type="molecule type" value="Genomic_DNA"/>
</dbReference>
<dbReference type="EMBL" id="FJ445417">
    <property type="protein sequence ID" value="ACJ71675.1"/>
    <property type="molecule type" value="Genomic_DNA"/>
</dbReference>
<dbReference type="RefSeq" id="WP_010978456.1">
    <property type="nucleotide sequence ID" value="NC_003106.2"/>
</dbReference>
<dbReference type="SMR" id="Q975C8"/>
<dbReference type="STRING" id="273063.STK_04800"/>
<dbReference type="GeneID" id="1458422"/>
<dbReference type="KEGG" id="sto:STK_04800"/>
<dbReference type="PATRIC" id="fig|273063.9.peg.554"/>
<dbReference type="eggNOG" id="arCOG01455">
    <property type="taxonomic scope" value="Archaea"/>
</dbReference>
<dbReference type="OrthoDB" id="8709at2157"/>
<dbReference type="BioCyc" id="MetaCyc:MONOMER-13730"/>
<dbReference type="BRENDA" id="1.3.1.84">
    <property type="organism ID" value="15396"/>
</dbReference>
<dbReference type="SABIO-RK" id="Q975C8"/>
<dbReference type="Proteomes" id="UP000001015">
    <property type="component" value="Chromosome"/>
</dbReference>
<dbReference type="GO" id="GO:0043958">
    <property type="term" value="F:acryloyl-CoA reductase (NADH) activity"/>
    <property type="evidence" value="ECO:0000314"/>
    <property type="project" value="UniProtKB"/>
</dbReference>
<dbReference type="GO" id="GO:0043957">
    <property type="term" value="F:acryloyl-CoA reductase (NADPH) activity"/>
    <property type="evidence" value="ECO:0007669"/>
    <property type="project" value="UniProtKB-EC"/>
</dbReference>
<dbReference type="GO" id="GO:0008270">
    <property type="term" value="F:zinc ion binding"/>
    <property type="evidence" value="ECO:0007669"/>
    <property type="project" value="InterPro"/>
</dbReference>
<dbReference type="CDD" id="cd08259">
    <property type="entry name" value="Zn_ADH5"/>
    <property type="match status" value="1"/>
</dbReference>
<dbReference type="Gene3D" id="3.90.180.10">
    <property type="entry name" value="Medium-chain alcohol dehydrogenases, catalytic domain"/>
    <property type="match status" value="1"/>
</dbReference>
<dbReference type="InterPro" id="IPR053496">
    <property type="entry name" value="Acryloyl-CoA_Reductase_Zn-ADH"/>
</dbReference>
<dbReference type="InterPro" id="IPR013149">
    <property type="entry name" value="ADH-like_C"/>
</dbReference>
<dbReference type="InterPro" id="IPR013154">
    <property type="entry name" value="ADH-like_N"/>
</dbReference>
<dbReference type="InterPro" id="IPR002328">
    <property type="entry name" value="ADH_Zn_CS"/>
</dbReference>
<dbReference type="InterPro" id="IPR011032">
    <property type="entry name" value="GroES-like_sf"/>
</dbReference>
<dbReference type="InterPro" id="IPR036291">
    <property type="entry name" value="NAD(P)-bd_dom_sf"/>
</dbReference>
<dbReference type="InterPro" id="IPR020843">
    <property type="entry name" value="PKS_ER"/>
</dbReference>
<dbReference type="InterPro" id="IPR002364">
    <property type="entry name" value="Quin_OxRdtase/zeta-crystal_CS"/>
</dbReference>
<dbReference type="NCBIfam" id="NF041172">
    <property type="entry name" value="AcrlCoa_red_Thmprot"/>
    <property type="match status" value="1"/>
</dbReference>
<dbReference type="NCBIfam" id="NF010344">
    <property type="entry name" value="PRK13771.1"/>
    <property type="match status" value="1"/>
</dbReference>
<dbReference type="PANTHER" id="PTHR43350:SF14">
    <property type="entry name" value="ALCOHOL DEHYDROGENASE (ZN CONTAINING) (ADH-8)"/>
    <property type="match status" value="1"/>
</dbReference>
<dbReference type="PANTHER" id="PTHR43350">
    <property type="entry name" value="NAD-DEPENDENT ALCOHOL DEHYDROGENASE"/>
    <property type="match status" value="1"/>
</dbReference>
<dbReference type="Pfam" id="PF08240">
    <property type="entry name" value="ADH_N"/>
    <property type="match status" value="1"/>
</dbReference>
<dbReference type="Pfam" id="PF00107">
    <property type="entry name" value="ADH_zinc_N"/>
    <property type="match status" value="1"/>
</dbReference>
<dbReference type="SMART" id="SM00829">
    <property type="entry name" value="PKS_ER"/>
    <property type="match status" value="1"/>
</dbReference>
<dbReference type="SUPFAM" id="SSF50129">
    <property type="entry name" value="GroES-like"/>
    <property type="match status" value="1"/>
</dbReference>
<dbReference type="SUPFAM" id="SSF51735">
    <property type="entry name" value="NAD(P)-binding Rossmann-fold domains"/>
    <property type="match status" value="1"/>
</dbReference>
<dbReference type="PROSITE" id="PS00059">
    <property type="entry name" value="ADH_ZINC"/>
    <property type="match status" value="1"/>
</dbReference>
<dbReference type="PROSITE" id="PS01162">
    <property type="entry name" value="QOR_ZETA_CRYSTAL"/>
    <property type="match status" value="1"/>
</dbReference>
<gene>
    <name type="ordered locus">STK_04800</name>
</gene>
<feature type="chain" id="PRO_0000404602" description="Acryloyl-coenzyme A reductase">
    <location>
        <begin position="1"/>
        <end position="334"/>
    </location>
</feature>
<feature type="binding site" evidence="2">
    <location>
        <position position="38"/>
    </location>
    <ligand>
        <name>Zn(2+)</name>
        <dbReference type="ChEBI" id="CHEBI:29105"/>
        <label>1</label>
        <note>catalytic</note>
    </ligand>
</feature>
<feature type="binding site" evidence="1">
    <location>
        <position position="39"/>
    </location>
    <ligand>
        <name>NADP(+)</name>
        <dbReference type="ChEBI" id="CHEBI:58349"/>
    </ligand>
</feature>
<feature type="binding site" evidence="2">
    <location>
        <position position="60"/>
    </location>
    <ligand>
        <name>Zn(2+)</name>
        <dbReference type="ChEBI" id="CHEBI:29105"/>
        <label>1</label>
        <note>catalytic</note>
    </ligand>
</feature>
<feature type="binding site" evidence="2">
    <location>
        <position position="90"/>
    </location>
    <ligand>
        <name>Zn(2+)</name>
        <dbReference type="ChEBI" id="CHEBI:29105"/>
        <label>2</label>
    </ligand>
</feature>
<feature type="binding site" evidence="2">
    <location>
        <position position="93"/>
    </location>
    <ligand>
        <name>Zn(2+)</name>
        <dbReference type="ChEBI" id="CHEBI:29105"/>
        <label>2</label>
    </ligand>
</feature>
<feature type="binding site" evidence="2">
    <location>
        <position position="96"/>
    </location>
    <ligand>
        <name>Zn(2+)</name>
        <dbReference type="ChEBI" id="CHEBI:29105"/>
        <label>2</label>
    </ligand>
</feature>
<feature type="binding site" evidence="2">
    <location>
        <position position="104"/>
    </location>
    <ligand>
        <name>Zn(2+)</name>
        <dbReference type="ChEBI" id="CHEBI:29105"/>
        <label>2</label>
    </ligand>
</feature>
<feature type="binding site" evidence="2">
    <location>
        <position position="146"/>
    </location>
    <ligand>
        <name>Zn(2+)</name>
        <dbReference type="ChEBI" id="CHEBI:29105"/>
        <label>1</label>
        <note>catalytic</note>
    </ligand>
</feature>
<feature type="binding site" evidence="1">
    <location>
        <begin position="173"/>
        <end position="176"/>
    </location>
    <ligand>
        <name>NADP(+)</name>
        <dbReference type="ChEBI" id="CHEBI:58349"/>
    </ligand>
</feature>
<feature type="binding site" evidence="1">
    <location>
        <begin position="195"/>
        <end position="197"/>
    </location>
    <ligand>
        <name>NADP(+)</name>
        <dbReference type="ChEBI" id="CHEBI:58349"/>
    </ligand>
</feature>
<comment type="function">
    <text evidence="4">Plays a role in autotrophic carbon fixation via the 3-hydroxypropionate/4-hydroxybutyrate cycle. Catalyzes the acryloyl-CoA dependent NADPH oxidation and formation of propionyl-CoA. Inactive towards 3-hydroxypropionyl-CoA, NADH and crotonyl-CoA.</text>
</comment>
<comment type="catalytic activity">
    <reaction evidence="4">
        <text>propanoyl-CoA + NADP(+) = acryloyl-CoA + NADPH + H(+)</text>
        <dbReference type="Rhea" id="RHEA:26454"/>
        <dbReference type="ChEBI" id="CHEBI:15378"/>
        <dbReference type="ChEBI" id="CHEBI:57367"/>
        <dbReference type="ChEBI" id="CHEBI:57392"/>
        <dbReference type="ChEBI" id="CHEBI:57783"/>
        <dbReference type="ChEBI" id="CHEBI:58349"/>
        <dbReference type="EC" id="1.3.1.84"/>
    </reaction>
</comment>
<comment type="cofactor">
    <cofactor evidence="4">
        <name>Zn(2+)</name>
        <dbReference type="ChEBI" id="CHEBI:29105"/>
    </cofactor>
</comment>
<comment type="biophysicochemical properties">
    <kinetics>
        <KM evidence="4">36 uM for NADPH</KM>
        <KM evidence="4">3 uM for acryloyl-CoA</KM>
    </kinetics>
    <phDependence>
        <text evidence="4">Optimum pH is 6.0 at 65 degrees Celsius. Retains half maximum activity at pH 7.5 at 65 degrees Celsius.</text>
    </phDependence>
</comment>
<comment type="subunit">
    <text evidence="4">Monomer.</text>
</comment>
<comment type="similarity">
    <text evidence="3">Belongs to the zinc-containing alcohol dehydrogenase family.</text>
</comment>